<protein>
    <recommendedName>
        <fullName evidence="2">Elongation factor Tu</fullName>
        <shortName evidence="2">EF-Tu</shortName>
        <ecNumber evidence="2">3.6.5.3</ecNumber>
    </recommendedName>
</protein>
<comment type="function">
    <text evidence="2">GTP hydrolase that promotes the GTP-dependent binding of aminoacyl-tRNA to the A-site of ribosomes during protein biosynthesis.</text>
</comment>
<comment type="catalytic activity">
    <reaction evidence="2">
        <text>GTP + H2O = GDP + phosphate + H(+)</text>
        <dbReference type="Rhea" id="RHEA:19669"/>
        <dbReference type="ChEBI" id="CHEBI:15377"/>
        <dbReference type="ChEBI" id="CHEBI:15378"/>
        <dbReference type="ChEBI" id="CHEBI:37565"/>
        <dbReference type="ChEBI" id="CHEBI:43474"/>
        <dbReference type="ChEBI" id="CHEBI:58189"/>
        <dbReference type="EC" id="3.6.5.3"/>
    </reaction>
    <physiologicalReaction direction="left-to-right" evidence="2">
        <dbReference type="Rhea" id="RHEA:19670"/>
    </physiologicalReaction>
</comment>
<comment type="subunit">
    <text evidence="2">Monomer.</text>
</comment>
<comment type="subcellular location">
    <subcellularLocation>
        <location evidence="2">Cytoplasm</location>
    </subcellularLocation>
</comment>
<comment type="similarity">
    <text evidence="2">Belongs to the TRAFAC class translation factor GTPase superfamily. Classic translation factor GTPase family. EF-Tu/EF-1A subfamily.</text>
</comment>
<accession>Q6ACZ0</accession>
<organism>
    <name type="scientific">Leifsonia xyli subsp. xyli (strain CTCB07)</name>
    <dbReference type="NCBI Taxonomy" id="281090"/>
    <lineage>
        <taxon>Bacteria</taxon>
        <taxon>Bacillati</taxon>
        <taxon>Actinomycetota</taxon>
        <taxon>Actinomycetes</taxon>
        <taxon>Micrococcales</taxon>
        <taxon>Microbacteriaceae</taxon>
        <taxon>Leifsonia</taxon>
    </lineage>
</organism>
<reference key="1">
    <citation type="journal article" date="2004" name="Mol. Plant Microbe Interact.">
        <title>The genome sequence of the Gram-positive sugarcane pathogen Leifsonia xyli subsp. xyli.</title>
        <authorList>
            <person name="Monteiro-Vitorello C.B."/>
            <person name="Camargo L.E.A."/>
            <person name="Van Sluys M.A."/>
            <person name="Kitajima J.P."/>
            <person name="Truffi D."/>
            <person name="do Amaral A.M."/>
            <person name="Harakava R."/>
            <person name="de Oliveira J.C.F."/>
            <person name="Wood D."/>
            <person name="de Oliveira M.C."/>
            <person name="Miyaki C.Y."/>
            <person name="Takita M.A."/>
            <person name="da Silva A.C.R."/>
            <person name="Furlan L.R."/>
            <person name="Carraro D.M."/>
            <person name="Camarotte G."/>
            <person name="Almeida N.F. Jr."/>
            <person name="Carrer H."/>
            <person name="Coutinho L.L."/>
            <person name="El-Dorry H.A."/>
            <person name="Ferro M.I.T."/>
            <person name="Gagliardi P.R."/>
            <person name="Giglioti E."/>
            <person name="Goldman M.H.S."/>
            <person name="Goldman G.H."/>
            <person name="Kimura E.T."/>
            <person name="Ferro E.S."/>
            <person name="Kuramae E.E."/>
            <person name="Lemos E.G.M."/>
            <person name="Lemos M.V.F."/>
            <person name="Mauro S.M.Z."/>
            <person name="Machado M.A."/>
            <person name="Marino C.L."/>
            <person name="Menck C.F."/>
            <person name="Nunes L.R."/>
            <person name="Oliveira R.C."/>
            <person name="Pereira G.G."/>
            <person name="Siqueira W."/>
            <person name="de Souza A.A."/>
            <person name="Tsai S.M."/>
            <person name="Zanca A.S."/>
            <person name="Simpson A.J.G."/>
            <person name="Brumbley S.M."/>
            <person name="Setubal J.C."/>
        </authorList>
    </citation>
    <scope>NUCLEOTIDE SEQUENCE [LARGE SCALE GENOMIC DNA]</scope>
    <source>
        <strain>CTCB07</strain>
    </source>
</reference>
<name>EFTU_LEIXX</name>
<proteinExistence type="inferred from homology"/>
<evidence type="ECO:0000250" key="1"/>
<evidence type="ECO:0000255" key="2">
    <source>
        <dbReference type="HAMAP-Rule" id="MF_00118"/>
    </source>
</evidence>
<feature type="chain" id="PRO_0000091338" description="Elongation factor Tu">
    <location>
        <begin position="1"/>
        <end position="397"/>
    </location>
</feature>
<feature type="domain" description="tr-type G">
    <location>
        <begin position="10"/>
        <end position="207"/>
    </location>
</feature>
<feature type="region of interest" description="G1" evidence="1">
    <location>
        <begin position="19"/>
        <end position="26"/>
    </location>
</feature>
<feature type="region of interest" description="G2" evidence="1">
    <location>
        <begin position="63"/>
        <end position="67"/>
    </location>
</feature>
<feature type="region of interest" description="G3" evidence="1">
    <location>
        <begin position="84"/>
        <end position="87"/>
    </location>
</feature>
<feature type="region of interest" description="G4" evidence="1">
    <location>
        <begin position="139"/>
        <end position="142"/>
    </location>
</feature>
<feature type="region of interest" description="G5" evidence="1">
    <location>
        <begin position="177"/>
        <end position="179"/>
    </location>
</feature>
<feature type="binding site" evidence="2">
    <location>
        <begin position="19"/>
        <end position="26"/>
    </location>
    <ligand>
        <name>GTP</name>
        <dbReference type="ChEBI" id="CHEBI:37565"/>
    </ligand>
</feature>
<feature type="binding site" evidence="2">
    <location>
        <position position="26"/>
    </location>
    <ligand>
        <name>Mg(2+)</name>
        <dbReference type="ChEBI" id="CHEBI:18420"/>
    </ligand>
</feature>
<feature type="binding site" evidence="2">
    <location>
        <begin position="84"/>
        <end position="88"/>
    </location>
    <ligand>
        <name>GTP</name>
        <dbReference type="ChEBI" id="CHEBI:37565"/>
    </ligand>
</feature>
<feature type="binding site" evidence="2">
    <location>
        <begin position="139"/>
        <end position="142"/>
    </location>
    <ligand>
        <name>GTP</name>
        <dbReference type="ChEBI" id="CHEBI:37565"/>
    </ligand>
</feature>
<keyword id="KW-0963">Cytoplasm</keyword>
<keyword id="KW-0251">Elongation factor</keyword>
<keyword id="KW-0342">GTP-binding</keyword>
<keyword id="KW-0378">Hydrolase</keyword>
<keyword id="KW-0460">Magnesium</keyword>
<keyword id="KW-0479">Metal-binding</keyword>
<keyword id="KW-0547">Nucleotide-binding</keyword>
<keyword id="KW-0648">Protein biosynthesis</keyword>
<keyword id="KW-1185">Reference proteome</keyword>
<gene>
    <name evidence="2" type="primary">tuf</name>
    <name type="ordered locus">Lxx20390</name>
</gene>
<sequence length="397" mass="43394">MAKAKFQRTKPHVNIGTLGHVDHGKTTLTAAISKVLADKYPSATNVQRDFASIDSAPEERQRGITINISHVEYETPKRHYAHVDAPGHADYIKNMITGAAQMDGAILVVAATDGPMAQTREHVLLAKQVGVPYLLVALNKSDMVDDEEILELVELEVRELLSSQDYLGDDAPVVRVSGLKALEGDEKWVQSVLDLMEAVDNNIPDPVRDKDKPFLMPVEDVFTITGRGTVVTGRAERGTLAVNSEVEIVGIRPTQKTTVTGIEMFHKQLDEAWAGENCGLLLRGTKREDVERGQVVVKPGSVTPHTSFEGTAYILSKDEGGRNNPIYTNYRPQFYFRTTDVTGVISLTEGTEMVMPGDTTDMTVELIQPIAMEEGLGFAIREGGRTVGAGKVTKIIN</sequence>
<dbReference type="EC" id="3.6.5.3" evidence="2"/>
<dbReference type="EMBL" id="AE016822">
    <property type="protein sequence ID" value="AAT89754.1"/>
    <property type="molecule type" value="Genomic_DNA"/>
</dbReference>
<dbReference type="RefSeq" id="WP_011186740.1">
    <property type="nucleotide sequence ID" value="NC_006087.1"/>
</dbReference>
<dbReference type="SMR" id="Q6ACZ0"/>
<dbReference type="STRING" id="281090.Lxx20390"/>
<dbReference type="KEGG" id="lxx:Lxx20390"/>
<dbReference type="eggNOG" id="COG0050">
    <property type="taxonomic scope" value="Bacteria"/>
</dbReference>
<dbReference type="HOGENOM" id="CLU_007265_0_1_11"/>
<dbReference type="Proteomes" id="UP000001306">
    <property type="component" value="Chromosome"/>
</dbReference>
<dbReference type="GO" id="GO:0005829">
    <property type="term" value="C:cytosol"/>
    <property type="evidence" value="ECO:0007669"/>
    <property type="project" value="TreeGrafter"/>
</dbReference>
<dbReference type="GO" id="GO:0005525">
    <property type="term" value="F:GTP binding"/>
    <property type="evidence" value="ECO:0007669"/>
    <property type="project" value="UniProtKB-UniRule"/>
</dbReference>
<dbReference type="GO" id="GO:0003924">
    <property type="term" value="F:GTPase activity"/>
    <property type="evidence" value="ECO:0007669"/>
    <property type="project" value="InterPro"/>
</dbReference>
<dbReference type="GO" id="GO:0003746">
    <property type="term" value="F:translation elongation factor activity"/>
    <property type="evidence" value="ECO:0007669"/>
    <property type="project" value="UniProtKB-UniRule"/>
</dbReference>
<dbReference type="CDD" id="cd01884">
    <property type="entry name" value="EF_Tu"/>
    <property type="match status" value="1"/>
</dbReference>
<dbReference type="CDD" id="cd03697">
    <property type="entry name" value="EFTU_II"/>
    <property type="match status" value="1"/>
</dbReference>
<dbReference type="CDD" id="cd03707">
    <property type="entry name" value="EFTU_III"/>
    <property type="match status" value="1"/>
</dbReference>
<dbReference type="FunFam" id="2.40.30.10:FF:000001">
    <property type="entry name" value="Elongation factor Tu"/>
    <property type="match status" value="1"/>
</dbReference>
<dbReference type="FunFam" id="3.40.50.300:FF:000003">
    <property type="entry name" value="Elongation factor Tu"/>
    <property type="match status" value="1"/>
</dbReference>
<dbReference type="Gene3D" id="3.40.50.300">
    <property type="entry name" value="P-loop containing nucleotide triphosphate hydrolases"/>
    <property type="match status" value="1"/>
</dbReference>
<dbReference type="Gene3D" id="2.40.30.10">
    <property type="entry name" value="Translation factors"/>
    <property type="match status" value="2"/>
</dbReference>
<dbReference type="HAMAP" id="MF_00118_B">
    <property type="entry name" value="EF_Tu_B"/>
    <property type="match status" value="1"/>
</dbReference>
<dbReference type="InterPro" id="IPR041709">
    <property type="entry name" value="EF-Tu_GTP-bd"/>
</dbReference>
<dbReference type="InterPro" id="IPR050055">
    <property type="entry name" value="EF-Tu_GTPase"/>
</dbReference>
<dbReference type="InterPro" id="IPR004161">
    <property type="entry name" value="EFTu-like_2"/>
</dbReference>
<dbReference type="InterPro" id="IPR033720">
    <property type="entry name" value="EFTU_2"/>
</dbReference>
<dbReference type="InterPro" id="IPR031157">
    <property type="entry name" value="G_TR_CS"/>
</dbReference>
<dbReference type="InterPro" id="IPR027417">
    <property type="entry name" value="P-loop_NTPase"/>
</dbReference>
<dbReference type="InterPro" id="IPR005225">
    <property type="entry name" value="Small_GTP-bd"/>
</dbReference>
<dbReference type="InterPro" id="IPR000795">
    <property type="entry name" value="T_Tr_GTP-bd_dom"/>
</dbReference>
<dbReference type="InterPro" id="IPR009000">
    <property type="entry name" value="Transl_B-barrel_sf"/>
</dbReference>
<dbReference type="InterPro" id="IPR009001">
    <property type="entry name" value="Transl_elong_EF1A/Init_IF2_C"/>
</dbReference>
<dbReference type="InterPro" id="IPR004541">
    <property type="entry name" value="Transl_elong_EFTu/EF1A_bac/org"/>
</dbReference>
<dbReference type="InterPro" id="IPR004160">
    <property type="entry name" value="Transl_elong_EFTu/EF1A_C"/>
</dbReference>
<dbReference type="NCBIfam" id="TIGR00485">
    <property type="entry name" value="EF-Tu"/>
    <property type="match status" value="1"/>
</dbReference>
<dbReference type="NCBIfam" id="NF000766">
    <property type="entry name" value="PRK00049.1"/>
    <property type="match status" value="1"/>
</dbReference>
<dbReference type="NCBIfam" id="NF009372">
    <property type="entry name" value="PRK12735.1"/>
    <property type="match status" value="1"/>
</dbReference>
<dbReference type="NCBIfam" id="NF009373">
    <property type="entry name" value="PRK12736.1"/>
    <property type="match status" value="1"/>
</dbReference>
<dbReference type="NCBIfam" id="TIGR00231">
    <property type="entry name" value="small_GTP"/>
    <property type="match status" value="1"/>
</dbReference>
<dbReference type="PANTHER" id="PTHR43721:SF22">
    <property type="entry name" value="ELONGATION FACTOR TU, MITOCHONDRIAL"/>
    <property type="match status" value="1"/>
</dbReference>
<dbReference type="PANTHER" id="PTHR43721">
    <property type="entry name" value="ELONGATION FACTOR TU-RELATED"/>
    <property type="match status" value="1"/>
</dbReference>
<dbReference type="Pfam" id="PF00009">
    <property type="entry name" value="GTP_EFTU"/>
    <property type="match status" value="1"/>
</dbReference>
<dbReference type="Pfam" id="PF03144">
    <property type="entry name" value="GTP_EFTU_D2"/>
    <property type="match status" value="1"/>
</dbReference>
<dbReference type="Pfam" id="PF03143">
    <property type="entry name" value="GTP_EFTU_D3"/>
    <property type="match status" value="1"/>
</dbReference>
<dbReference type="PRINTS" id="PR00315">
    <property type="entry name" value="ELONGATNFCT"/>
</dbReference>
<dbReference type="SUPFAM" id="SSF50465">
    <property type="entry name" value="EF-Tu/eEF-1alpha/eIF2-gamma C-terminal domain"/>
    <property type="match status" value="1"/>
</dbReference>
<dbReference type="SUPFAM" id="SSF52540">
    <property type="entry name" value="P-loop containing nucleoside triphosphate hydrolases"/>
    <property type="match status" value="1"/>
</dbReference>
<dbReference type="SUPFAM" id="SSF50447">
    <property type="entry name" value="Translation proteins"/>
    <property type="match status" value="1"/>
</dbReference>
<dbReference type="PROSITE" id="PS00301">
    <property type="entry name" value="G_TR_1"/>
    <property type="match status" value="1"/>
</dbReference>
<dbReference type="PROSITE" id="PS51722">
    <property type="entry name" value="G_TR_2"/>
    <property type="match status" value="1"/>
</dbReference>